<organism>
    <name type="scientific">Caenorhabditis elegans</name>
    <dbReference type="NCBI Taxonomy" id="6239"/>
    <lineage>
        <taxon>Eukaryota</taxon>
        <taxon>Metazoa</taxon>
        <taxon>Ecdysozoa</taxon>
        <taxon>Nematoda</taxon>
        <taxon>Chromadorea</taxon>
        <taxon>Rhabditida</taxon>
        <taxon>Rhabditina</taxon>
        <taxon>Rhabditomorpha</taxon>
        <taxon>Rhabditoidea</taxon>
        <taxon>Rhabditidae</taxon>
        <taxon>Peloderinae</taxon>
        <taxon>Caenorhabditis</taxon>
    </lineage>
</organism>
<protein>
    <recommendedName>
        <fullName>Serpentine receptor class beta-5</fullName>
        <shortName>Protein srb-5</shortName>
    </recommendedName>
</protein>
<feature type="chain" id="PRO_0000104499" description="Serpentine receptor class beta-5">
    <location>
        <begin position="1"/>
        <end position="345"/>
    </location>
</feature>
<feature type="topological domain" description="Extracellular" evidence="4">
    <location>
        <begin position="1"/>
        <end position="22"/>
    </location>
</feature>
<feature type="transmembrane region" description="Helical; Name=1" evidence="1">
    <location>
        <begin position="23"/>
        <end position="43"/>
    </location>
</feature>
<feature type="topological domain" description="Cytoplasmic" evidence="4">
    <location>
        <begin position="44"/>
        <end position="57"/>
    </location>
</feature>
<feature type="transmembrane region" description="Helical; Name=2" evidence="1">
    <location>
        <begin position="58"/>
        <end position="78"/>
    </location>
</feature>
<feature type="topological domain" description="Extracellular" evidence="4">
    <location>
        <begin position="79"/>
        <end position="103"/>
    </location>
</feature>
<feature type="transmembrane region" description="Helical; Name=3" evidence="1">
    <location>
        <begin position="104"/>
        <end position="124"/>
    </location>
</feature>
<feature type="topological domain" description="Cytoplasmic" evidence="4">
    <location>
        <begin position="125"/>
        <end position="142"/>
    </location>
</feature>
<feature type="transmembrane region" description="Helical; Name=4" evidence="1">
    <location>
        <begin position="143"/>
        <end position="163"/>
    </location>
</feature>
<feature type="topological domain" description="Extracellular" evidence="4">
    <location>
        <begin position="164"/>
        <end position="189"/>
    </location>
</feature>
<feature type="transmembrane region" description="Helical; Name=5" evidence="1">
    <location>
        <begin position="190"/>
        <end position="210"/>
    </location>
</feature>
<feature type="topological domain" description="Cytoplasmic" evidence="4">
    <location>
        <begin position="211"/>
        <end position="241"/>
    </location>
</feature>
<feature type="transmembrane region" description="Helical; Name=6" evidence="1">
    <location>
        <begin position="242"/>
        <end position="262"/>
    </location>
</feature>
<feature type="topological domain" description="Extracellular" evidence="4">
    <location>
        <begin position="263"/>
        <end position="280"/>
    </location>
</feature>
<feature type="transmembrane region" description="Helical; Name=7" evidence="1">
    <location>
        <begin position="281"/>
        <end position="301"/>
    </location>
</feature>
<feature type="topological domain" description="Cytoplasmic" evidence="4">
    <location>
        <begin position="302"/>
        <end position="345"/>
    </location>
</feature>
<feature type="glycosylation site" description="N-linked (GlcNAc...) asparagine" evidence="2">
    <location>
        <position position="5"/>
    </location>
</feature>
<accession>Q95ZY4</accession>
<name>SRB5_CAEEL</name>
<reference key="1">
    <citation type="journal article" date="1998" name="Science">
        <title>Genome sequence of the nematode C. elegans: a platform for investigating biology.</title>
        <authorList>
            <consortium name="The C. elegans sequencing consortium"/>
        </authorList>
    </citation>
    <scope>NUCLEOTIDE SEQUENCE [LARGE SCALE GENOMIC DNA]</scope>
    <source>
        <strain>Bristol N2</strain>
    </source>
</reference>
<reference key="2">
    <citation type="journal article" date="2017" name="PLoS Biol.">
        <title>Chemosensory and hyperoxia circuits in C. elegans males influence sperm navigational capacity.</title>
        <authorList>
            <person name="Hoang H.D."/>
            <person name="Miller M.A."/>
        </authorList>
    </citation>
    <scope>FUNCTION</scope>
    <scope>SUBCELLULAR LOCATION</scope>
    <scope>TISSUE SPECIFICITY</scope>
</reference>
<sequence length="345" mass="39932">MAEINQTKCDLAFQISYHPIYRLAQFWTLSVSLLAVPSLLYFLLKRVLLLPFHGNLKCLLITYFSSIFLYALVLCFDFSYQCLIPFIVTTKCSLIIDQTLYKCGHMTSLFFLTTPMLLPFGFSIERFVAVGMAYKYEKMRTLLGPILCFILVAPNFVVFYFLFRDEQFTDSFISFLVLPNTPAVQFNNYLWFLLYAKIGNFCCNCVLLIFHKRFKNTYLKKKTSLSVRYALEEISNSSKFTLILTFTHLVFFGAYTIGSILVRTLGESFFGNFLNFYVARGVNCAVPTYNLLIAFVGLISLRQLNSRRHAKILTKVLIRVTGQEGARNYDDIIMQQWNTVSNRTR</sequence>
<proteinExistence type="evidence at transcript level"/>
<gene>
    <name evidence="5" type="primary">srb-5</name>
    <name evidence="5" type="ORF">C27D6.6</name>
</gene>
<dbReference type="EMBL" id="BX284602">
    <property type="protein sequence ID" value="CCD65814.1"/>
    <property type="molecule type" value="Genomic_DNA"/>
</dbReference>
<dbReference type="RefSeq" id="NP_494961.1">
    <property type="nucleotide sequence ID" value="NM_062560.1"/>
</dbReference>
<dbReference type="FunCoup" id="Q95ZY4">
    <property type="interactions" value="2"/>
</dbReference>
<dbReference type="STRING" id="6239.C27D6.6.1"/>
<dbReference type="GlyCosmos" id="Q95ZY4">
    <property type="glycosylation" value="1 site, No reported glycans"/>
</dbReference>
<dbReference type="PaxDb" id="6239-C27D6.6"/>
<dbReference type="EnsemblMetazoa" id="C27D6.6.1">
    <property type="protein sequence ID" value="C27D6.6.1"/>
    <property type="gene ID" value="WBGene00005070"/>
</dbReference>
<dbReference type="GeneID" id="191787"/>
<dbReference type="KEGG" id="cel:CELE_C27D6.6"/>
<dbReference type="UCSC" id="C27D6.6">
    <property type="organism name" value="c. elegans"/>
</dbReference>
<dbReference type="AGR" id="WB:WBGene00005070"/>
<dbReference type="CTD" id="191787"/>
<dbReference type="WormBase" id="C27D6.6">
    <property type="protein sequence ID" value="CE06886"/>
    <property type="gene ID" value="WBGene00005070"/>
    <property type="gene designation" value="srb-5"/>
</dbReference>
<dbReference type="eggNOG" id="ENOG502SXP2">
    <property type="taxonomic scope" value="Eukaryota"/>
</dbReference>
<dbReference type="GeneTree" id="ENSGT00970000195867"/>
<dbReference type="HOGENOM" id="CLU_045882_1_0_1"/>
<dbReference type="InParanoid" id="Q95ZY4"/>
<dbReference type="OMA" id="HCIVPFF"/>
<dbReference type="OrthoDB" id="5836746at2759"/>
<dbReference type="PhylomeDB" id="Q95ZY4"/>
<dbReference type="PRO" id="PR:Q95ZY4"/>
<dbReference type="Proteomes" id="UP000001940">
    <property type="component" value="Chromosome II"/>
</dbReference>
<dbReference type="GO" id="GO:0030425">
    <property type="term" value="C:dendrite"/>
    <property type="evidence" value="ECO:0007669"/>
    <property type="project" value="UniProtKB-SubCell"/>
</dbReference>
<dbReference type="GO" id="GO:0043204">
    <property type="term" value="C:perikaryon"/>
    <property type="evidence" value="ECO:0007669"/>
    <property type="project" value="UniProtKB-SubCell"/>
</dbReference>
<dbReference type="GO" id="GO:0005886">
    <property type="term" value="C:plasma membrane"/>
    <property type="evidence" value="ECO:0007669"/>
    <property type="project" value="UniProtKB-SubCell"/>
</dbReference>
<dbReference type="GO" id="GO:0004930">
    <property type="term" value="F:G protein-coupled receptor activity"/>
    <property type="evidence" value="ECO:0007669"/>
    <property type="project" value="UniProtKB-KW"/>
</dbReference>
<dbReference type="GO" id="GO:0007606">
    <property type="term" value="P:sensory perception of chemical stimulus"/>
    <property type="evidence" value="ECO:0007669"/>
    <property type="project" value="InterPro"/>
</dbReference>
<dbReference type="InterPro" id="IPR002184">
    <property type="entry name" value="7TM_GPCR_serpentine_rcpt_Srb"/>
</dbReference>
<dbReference type="PANTHER" id="PTHR31216">
    <property type="entry name" value="SERPENTINE RECEPTOR CLASS BETA-1-RELATED-RELATED"/>
    <property type="match status" value="1"/>
</dbReference>
<dbReference type="PANTHER" id="PTHR31216:SF7">
    <property type="entry name" value="SERPENTINE RECEPTOR CLASS BETA-5"/>
    <property type="match status" value="1"/>
</dbReference>
<dbReference type="Pfam" id="PF02175">
    <property type="entry name" value="7TM_GPCR_Srb"/>
    <property type="match status" value="1"/>
</dbReference>
<dbReference type="PRINTS" id="PR00699">
    <property type="entry name" value="TMPROTEINSRB"/>
</dbReference>
<keyword id="KW-1003">Cell membrane</keyword>
<keyword id="KW-0966">Cell projection</keyword>
<keyword id="KW-0297">G-protein coupled receptor</keyword>
<keyword id="KW-0325">Glycoprotein</keyword>
<keyword id="KW-0472">Membrane</keyword>
<keyword id="KW-0675">Receptor</keyword>
<keyword id="KW-1185">Reference proteome</keyword>
<keyword id="KW-0807">Transducer</keyword>
<keyword id="KW-0812">Transmembrane</keyword>
<keyword id="KW-1133">Transmembrane helix</keyword>
<evidence type="ECO:0000255" key="1"/>
<evidence type="ECO:0000255" key="2">
    <source>
        <dbReference type="PROSITE-ProRule" id="PRU00498"/>
    </source>
</evidence>
<evidence type="ECO:0000269" key="3">
    <source>
    </source>
</evidence>
<evidence type="ECO:0000305" key="4"/>
<evidence type="ECO:0000312" key="5">
    <source>
        <dbReference type="WormBase" id="C27D6.6"/>
    </source>
</evidence>
<comment type="function">
    <text evidence="3 4">G-protein coupled receptor (Probable). Plays a role in the navigational capacity of sperm and promotes the targeting of sperm derived from males to the fertilization site in the uterus of hermaphrodites (PubMed:28662030).</text>
</comment>
<comment type="subcellular location">
    <subcellularLocation>
        <location evidence="4">Cell membrane</location>
        <topology evidence="4">Multi-pass membrane protein</topology>
    </subcellularLocation>
    <subcellularLocation>
        <location evidence="3">Perikaryon</location>
    </subcellularLocation>
    <subcellularLocation>
        <location evidence="3">Cell projection</location>
        <location evidence="3">Dendrite</location>
    </subcellularLocation>
</comment>
<comment type="tissue specificity">
    <text evidence="3">Expressed throughout the head.</text>
</comment>
<comment type="similarity">
    <text evidence="4">Belongs to the nematode receptor-like protein srb family.</text>
</comment>